<protein>
    <recommendedName>
        <fullName>U11-theraphotoxin-Hhn1a</fullName>
        <shortName>U11-TRTX-Hhn1a</shortName>
    </recommendedName>
    <alternativeName>
        <fullName>Hainantoxin-XVI.22</fullName>
        <shortName>HNTX-XVI.22</shortName>
    </alternativeName>
    <alternativeName>
        <fullName>Peptide F4-19.87</fullName>
    </alternativeName>
</protein>
<accession>D2Y295</accession>
<proteinExistence type="evidence at protein level"/>
<comment type="function">
    <text evidence="1">Probable ion channel inhibitor.</text>
</comment>
<comment type="subcellular location">
    <subcellularLocation>
        <location>Secreted</location>
    </subcellularLocation>
</comment>
<comment type="tissue specificity">
    <text>Expressed by the venom gland.</text>
</comment>
<comment type="domain">
    <text evidence="1">The presence of a 'disulfide through disulfide knot' structurally defines this protein as a knottin.</text>
</comment>
<comment type="similarity">
    <text evidence="5">Belongs to the neurotoxin 14 (magi-1) family. 01 (HNTX-16) subfamily.</text>
</comment>
<organism>
    <name type="scientific">Cyriopagopus hainanus</name>
    <name type="common">Chinese bird spider</name>
    <name type="synonym">Haplopelma hainanum</name>
    <dbReference type="NCBI Taxonomy" id="209901"/>
    <lineage>
        <taxon>Eukaryota</taxon>
        <taxon>Metazoa</taxon>
        <taxon>Ecdysozoa</taxon>
        <taxon>Arthropoda</taxon>
        <taxon>Chelicerata</taxon>
        <taxon>Arachnida</taxon>
        <taxon>Araneae</taxon>
        <taxon>Mygalomorphae</taxon>
        <taxon>Theraphosidae</taxon>
        <taxon>Haplopelma</taxon>
    </lineage>
</organism>
<evidence type="ECO:0000250" key="1"/>
<evidence type="ECO:0000255" key="2"/>
<evidence type="ECO:0000256" key="3">
    <source>
        <dbReference type="SAM" id="MobiDB-lite"/>
    </source>
</evidence>
<evidence type="ECO:0000269" key="4">
    <source>
    </source>
</evidence>
<evidence type="ECO:0000305" key="5"/>
<sequence length="113" mass="13059">MNTVRVAFLLVFVLAVSLGQADKDENRMEMQEKTEQGKSYLDFAENLLLQKLEELEAKLLEEDSEESRNSRQKRCIGEGVPCDENDPRCCSGLVCLKPTLHGIWYKSYYCYKK</sequence>
<reference key="1">
    <citation type="journal article" date="2010" name="J. Proteome Res.">
        <title>Molecular diversification of peptide toxins from the tarantula Haplopelma hainanum (Ornithoctonus hainana) venom based on transcriptomic, peptidomic, and genomic analyses.</title>
        <authorList>
            <person name="Tang X."/>
            <person name="Zhang Y."/>
            <person name="Hu W."/>
            <person name="Xu D."/>
            <person name="Tao H."/>
            <person name="Yang X."/>
            <person name="Li Y."/>
            <person name="Jiang L."/>
            <person name="Liang S."/>
        </authorList>
    </citation>
    <scope>NUCLEOTIDE SEQUENCE [LARGE SCALE GENOMIC DNA / MRNA]</scope>
    <scope>PROTEIN SEQUENCE OF 75-113</scope>
    <scope>IDENTIFICATION BY MASS SPECTROMETRY</scope>
    <source>
        <tissue>Venom</tissue>
        <tissue>Venom gland</tissue>
    </source>
</reference>
<keyword id="KW-0903">Direct protein sequencing</keyword>
<keyword id="KW-1015">Disulfide bond</keyword>
<keyword id="KW-0872">Ion channel impairing toxin</keyword>
<keyword id="KW-0960">Knottin</keyword>
<keyword id="KW-0964">Secreted</keyword>
<keyword id="KW-0732">Signal</keyword>
<keyword id="KW-0800">Toxin</keyword>
<feature type="signal peptide" evidence="2">
    <location>
        <begin position="1"/>
        <end position="21"/>
    </location>
</feature>
<feature type="propeptide" id="PRO_0000400899" evidence="4">
    <location>
        <begin position="22"/>
        <end position="74"/>
    </location>
</feature>
<feature type="peptide" id="PRO_0000400900" description="U11-theraphotoxin-Hhn1a">
    <location>
        <begin position="75"/>
        <end position="113"/>
    </location>
</feature>
<feature type="region of interest" description="Disordered" evidence="3">
    <location>
        <begin position="61"/>
        <end position="83"/>
    </location>
</feature>
<feature type="disulfide bond" evidence="1">
    <location>
        <begin position="75"/>
        <end position="90"/>
    </location>
</feature>
<feature type="disulfide bond" evidence="1">
    <location>
        <begin position="82"/>
        <end position="95"/>
    </location>
</feature>
<feature type="disulfide bond" evidence="1">
    <location>
        <begin position="89"/>
        <end position="110"/>
    </location>
</feature>
<dbReference type="EMBL" id="GU292972">
    <property type="protein sequence ID" value="ADB56788.1"/>
    <property type="molecule type" value="mRNA"/>
</dbReference>
<dbReference type="EMBL" id="GU293121">
    <property type="protein sequence ID" value="ADB56937.1"/>
    <property type="molecule type" value="Genomic_DNA"/>
</dbReference>
<dbReference type="ArachnoServer" id="AS001592">
    <property type="toxin name" value="U11-theraphotoxin-Hhn1a"/>
</dbReference>
<dbReference type="GO" id="GO:0005576">
    <property type="term" value="C:extracellular region"/>
    <property type="evidence" value="ECO:0007669"/>
    <property type="project" value="UniProtKB-SubCell"/>
</dbReference>
<dbReference type="GO" id="GO:0019871">
    <property type="term" value="F:sodium channel inhibitor activity"/>
    <property type="evidence" value="ECO:0007669"/>
    <property type="project" value="InterPro"/>
</dbReference>
<dbReference type="GO" id="GO:0090729">
    <property type="term" value="F:toxin activity"/>
    <property type="evidence" value="ECO:0007669"/>
    <property type="project" value="UniProtKB-KW"/>
</dbReference>
<dbReference type="InterPro" id="IPR012627">
    <property type="entry name" value="Toxin_22"/>
</dbReference>
<dbReference type="Pfam" id="PF08092">
    <property type="entry name" value="Toxin_22"/>
    <property type="match status" value="1"/>
</dbReference>
<name>H1622_CYRHA</name>